<organism>
    <name type="scientific">Azotobacter vinelandii (strain DJ / ATCC BAA-1303)</name>
    <dbReference type="NCBI Taxonomy" id="322710"/>
    <lineage>
        <taxon>Bacteria</taxon>
        <taxon>Pseudomonadati</taxon>
        <taxon>Pseudomonadota</taxon>
        <taxon>Gammaproteobacteria</taxon>
        <taxon>Pseudomonadales</taxon>
        <taxon>Pseudomonadaceae</taxon>
        <taxon>Azotobacter</taxon>
    </lineage>
</organism>
<protein>
    <recommendedName>
        <fullName evidence="1">Adenylate kinase</fullName>
        <shortName evidence="1">AK</shortName>
        <ecNumber evidence="1">2.7.4.3</ecNumber>
    </recommendedName>
    <alternativeName>
        <fullName evidence="1">ATP-AMP transphosphorylase</fullName>
    </alternativeName>
    <alternativeName>
        <fullName evidence="1">ATP:AMP phosphotransferase</fullName>
    </alternativeName>
    <alternativeName>
        <fullName evidence="1">Adenylate monophosphate kinase</fullName>
    </alternativeName>
</protein>
<gene>
    <name evidence="1" type="primary">adk</name>
    <name type="ordered locus">Avin_39280</name>
</gene>
<evidence type="ECO:0000255" key="1">
    <source>
        <dbReference type="HAMAP-Rule" id="MF_00235"/>
    </source>
</evidence>
<reference key="1">
    <citation type="journal article" date="2009" name="J. Bacteriol.">
        <title>Genome sequence of Azotobacter vinelandii, an obligate aerobe specialized to support diverse anaerobic metabolic processes.</title>
        <authorList>
            <person name="Setubal J.C."/>
            <person name="Dos Santos P."/>
            <person name="Goldman B.S."/>
            <person name="Ertesvaag H."/>
            <person name="Espin G."/>
            <person name="Rubio L.M."/>
            <person name="Valla S."/>
            <person name="Almeida N.F."/>
            <person name="Balasubramanian D."/>
            <person name="Cromes L."/>
            <person name="Curatti L."/>
            <person name="Du Z."/>
            <person name="Godsy E."/>
            <person name="Goodner B."/>
            <person name="Hellner-Burris K."/>
            <person name="Hernandez J.A."/>
            <person name="Houmiel K."/>
            <person name="Imperial J."/>
            <person name="Kennedy C."/>
            <person name="Larson T.J."/>
            <person name="Latreille P."/>
            <person name="Ligon L.S."/>
            <person name="Lu J."/>
            <person name="Maerk M."/>
            <person name="Miller N.M."/>
            <person name="Norton S."/>
            <person name="O'Carroll I.P."/>
            <person name="Paulsen I."/>
            <person name="Raulfs E.C."/>
            <person name="Roemer R."/>
            <person name="Rosser J."/>
            <person name="Segura D."/>
            <person name="Slater S."/>
            <person name="Stricklin S.L."/>
            <person name="Studholme D.J."/>
            <person name="Sun J."/>
            <person name="Viana C.J."/>
            <person name="Wallin E."/>
            <person name="Wang B."/>
            <person name="Wheeler C."/>
            <person name="Zhu H."/>
            <person name="Dean D.R."/>
            <person name="Dixon R."/>
            <person name="Wood D."/>
        </authorList>
    </citation>
    <scope>NUCLEOTIDE SEQUENCE [LARGE SCALE GENOMIC DNA]</scope>
    <source>
        <strain>DJ / ATCC BAA-1303</strain>
    </source>
</reference>
<accession>C1DSX5</accession>
<keyword id="KW-0067">ATP-binding</keyword>
<keyword id="KW-0963">Cytoplasm</keyword>
<keyword id="KW-0418">Kinase</keyword>
<keyword id="KW-0545">Nucleotide biosynthesis</keyword>
<keyword id="KW-0547">Nucleotide-binding</keyword>
<keyword id="KW-0808">Transferase</keyword>
<feature type="chain" id="PRO_1000204399" description="Adenylate kinase">
    <location>
        <begin position="1"/>
        <end position="215"/>
    </location>
</feature>
<feature type="region of interest" description="NMP" evidence="1">
    <location>
        <begin position="30"/>
        <end position="59"/>
    </location>
</feature>
<feature type="region of interest" description="LID" evidence="1">
    <location>
        <begin position="122"/>
        <end position="159"/>
    </location>
</feature>
<feature type="binding site" evidence="1">
    <location>
        <begin position="10"/>
        <end position="15"/>
    </location>
    <ligand>
        <name>ATP</name>
        <dbReference type="ChEBI" id="CHEBI:30616"/>
    </ligand>
</feature>
<feature type="binding site" evidence="1">
    <location>
        <position position="31"/>
    </location>
    <ligand>
        <name>AMP</name>
        <dbReference type="ChEBI" id="CHEBI:456215"/>
    </ligand>
</feature>
<feature type="binding site" evidence="1">
    <location>
        <position position="36"/>
    </location>
    <ligand>
        <name>AMP</name>
        <dbReference type="ChEBI" id="CHEBI:456215"/>
    </ligand>
</feature>
<feature type="binding site" evidence="1">
    <location>
        <begin position="57"/>
        <end position="59"/>
    </location>
    <ligand>
        <name>AMP</name>
        <dbReference type="ChEBI" id="CHEBI:456215"/>
    </ligand>
</feature>
<feature type="binding site" evidence="1">
    <location>
        <begin position="85"/>
        <end position="88"/>
    </location>
    <ligand>
        <name>AMP</name>
        <dbReference type="ChEBI" id="CHEBI:456215"/>
    </ligand>
</feature>
<feature type="binding site" evidence="1">
    <location>
        <position position="92"/>
    </location>
    <ligand>
        <name>AMP</name>
        <dbReference type="ChEBI" id="CHEBI:456215"/>
    </ligand>
</feature>
<feature type="binding site" evidence="1">
    <location>
        <position position="123"/>
    </location>
    <ligand>
        <name>ATP</name>
        <dbReference type="ChEBI" id="CHEBI:30616"/>
    </ligand>
</feature>
<feature type="binding site" evidence="1">
    <location>
        <begin position="132"/>
        <end position="133"/>
    </location>
    <ligand>
        <name>ATP</name>
        <dbReference type="ChEBI" id="CHEBI:30616"/>
    </ligand>
</feature>
<feature type="binding site" evidence="1">
    <location>
        <position position="156"/>
    </location>
    <ligand>
        <name>AMP</name>
        <dbReference type="ChEBI" id="CHEBI:456215"/>
    </ligand>
</feature>
<feature type="binding site" evidence="1">
    <location>
        <position position="167"/>
    </location>
    <ligand>
        <name>AMP</name>
        <dbReference type="ChEBI" id="CHEBI:456215"/>
    </ligand>
</feature>
<feature type="binding site" evidence="1">
    <location>
        <position position="201"/>
    </location>
    <ligand>
        <name>ATP</name>
        <dbReference type="ChEBI" id="CHEBI:30616"/>
    </ligand>
</feature>
<name>KAD_AZOVD</name>
<dbReference type="EC" id="2.7.4.3" evidence="1"/>
<dbReference type="EMBL" id="CP001157">
    <property type="protein sequence ID" value="ACO80068.1"/>
    <property type="molecule type" value="Genomic_DNA"/>
</dbReference>
<dbReference type="RefSeq" id="WP_012702443.1">
    <property type="nucleotide sequence ID" value="NC_012560.1"/>
</dbReference>
<dbReference type="SMR" id="C1DSX5"/>
<dbReference type="STRING" id="322710.Avin_39280"/>
<dbReference type="EnsemblBacteria" id="ACO80068">
    <property type="protein sequence ID" value="ACO80068"/>
    <property type="gene ID" value="Avin_39280"/>
</dbReference>
<dbReference type="GeneID" id="88186885"/>
<dbReference type="KEGG" id="avn:Avin_39280"/>
<dbReference type="eggNOG" id="COG0563">
    <property type="taxonomic scope" value="Bacteria"/>
</dbReference>
<dbReference type="HOGENOM" id="CLU_032354_1_2_6"/>
<dbReference type="OrthoDB" id="9805030at2"/>
<dbReference type="UniPathway" id="UPA00588">
    <property type="reaction ID" value="UER00649"/>
</dbReference>
<dbReference type="Proteomes" id="UP000002424">
    <property type="component" value="Chromosome"/>
</dbReference>
<dbReference type="GO" id="GO:0005737">
    <property type="term" value="C:cytoplasm"/>
    <property type="evidence" value="ECO:0007669"/>
    <property type="project" value="UniProtKB-SubCell"/>
</dbReference>
<dbReference type="GO" id="GO:0004017">
    <property type="term" value="F:adenylate kinase activity"/>
    <property type="evidence" value="ECO:0007669"/>
    <property type="project" value="UniProtKB-UniRule"/>
</dbReference>
<dbReference type="GO" id="GO:0005524">
    <property type="term" value="F:ATP binding"/>
    <property type="evidence" value="ECO:0007669"/>
    <property type="project" value="UniProtKB-UniRule"/>
</dbReference>
<dbReference type="GO" id="GO:0044209">
    <property type="term" value="P:AMP salvage"/>
    <property type="evidence" value="ECO:0007669"/>
    <property type="project" value="UniProtKB-UniRule"/>
</dbReference>
<dbReference type="CDD" id="cd01428">
    <property type="entry name" value="ADK"/>
    <property type="match status" value="1"/>
</dbReference>
<dbReference type="FunFam" id="3.40.50.300:FF:000106">
    <property type="entry name" value="Adenylate kinase mitochondrial"/>
    <property type="match status" value="1"/>
</dbReference>
<dbReference type="Gene3D" id="3.40.50.300">
    <property type="entry name" value="P-loop containing nucleotide triphosphate hydrolases"/>
    <property type="match status" value="1"/>
</dbReference>
<dbReference type="HAMAP" id="MF_00235">
    <property type="entry name" value="Adenylate_kinase_Adk"/>
    <property type="match status" value="1"/>
</dbReference>
<dbReference type="InterPro" id="IPR006259">
    <property type="entry name" value="Adenyl_kin_sub"/>
</dbReference>
<dbReference type="InterPro" id="IPR000850">
    <property type="entry name" value="Adenylat/UMP-CMP_kin"/>
</dbReference>
<dbReference type="InterPro" id="IPR033690">
    <property type="entry name" value="Adenylat_kinase_CS"/>
</dbReference>
<dbReference type="InterPro" id="IPR007862">
    <property type="entry name" value="Adenylate_kinase_lid-dom"/>
</dbReference>
<dbReference type="InterPro" id="IPR027417">
    <property type="entry name" value="P-loop_NTPase"/>
</dbReference>
<dbReference type="NCBIfam" id="TIGR01351">
    <property type="entry name" value="adk"/>
    <property type="match status" value="1"/>
</dbReference>
<dbReference type="NCBIfam" id="NF001379">
    <property type="entry name" value="PRK00279.1-1"/>
    <property type="match status" value="1"/>
</dbReference>
<dbReference type="NCBIfam" id="NF001380">
    <property type="entry name" value="PRK00279.1-2"/>
    <property type="match status" value="1"/>
</dbReference>
<dbReference type="NCBIfam" id="NF001381">
    <property type="entry name" value="PRK00279.1-3"/>
    <property type="match status" value="1"/>
</dbReference>
<dbReference type="NCBIfam" id="NF011100">
    <property type="entry name" value="PRK14527.1"/>
    <property type="match status" value="1"/>
</dbReference>
<dbReference type="PANTHER" id="PTHR23359">
    <property type="entry name" value="NUCLEOTIDE KINASE"/>
    <property type="match status" value="1"/>
</dbReference>
<dbReference type="Pfam" id="PF00406">
    <property type="entry name" value="ADK"/>
    <property type="match status" value="1"/>
</dbReference>
<dbReference type="Pfam" id="PF05191">
    <property type="entry name" value="ADK_lid"/>
    <property type="match status" value="1"/>
</dbReference>
<dbReference type="PRINTS" id="PR00094">
    <property type="entry name" value="ADENYLTKNASE"/>
</dbReference>
<dbReference type="SUPFAM" id="SSF52540">
    <property type="entry name" value="P-loop containing nucleoside triphosphate hydrolases"/>
    <property type="match status" value="1"/>
</dbReference>
<dbReference type="PROSITE" id="PS00113">
    <property type="entry name" value="ADENYLATE_KINASE"/>
    <property type="match status" value="1"/>
</dbReference>
<proteinExistence type="inferred from homology"/>
<comment type="function">
    <text evidence="1">Catalyzes the reversible transfer of the terminal phosphate group between ATP and AMP. Plays an important role in cellular energy homeostasis and in adenine nucleotide metabolism.</text>
</comment>
<comment type="catalytic activity">
    <reaction evidence="1">
        <text>AMP + ATP = 2 ADP</text>
        <dbReference type="Rhea" id="RHEA:12973"/>
        <dbReference type="ChEBI" id="CHEBI:30616"/>
        <dbReference type="ChEBI" id="CHEBI:456215"/>
        <dbReference type="ChEBI" id="CHEBI:456216"/>
        <dbReference type="EC" id="2.7.4.3"/>
    </reaction>
</comment>
<comment type="pathway">
    <text evidence="1">Purine metabolism; AMP biosynthesis via salvage pathway; AMP from ADP: step 1/1.</text>
</comment>
<comment type="subunit">
    <text evidence="1">Monomer.</text>
</comment>
<comment type="subcellular location">
    <subcellularLocation>
        <location evidence="1">Cytoplasm</location>
    </subcellularLocation>
</comment>
<comment type="domain">
    <text evidence="1">Consists of three domains, a large central CORE domain and two small peripheral domains, NMPbind and LID, which undergo movements during catalysis. The LID domain closes over the site of phosphoryl transfer upon ATP binding. Assembling and dissambling the active center during each catalytic cycle provides an effective means to prevent ATP hydrolysis.</text>
</comment>
<comment type="similarity">
    <text evidence="1">Belongs to the adenylate kinase family.</text>
</comment>
<sequence length="215" mass="23351">MRVILLGAPGAGKGTQARFITERFGIPQISTGDMLRAAVKAGSPLGLKVKGVMDSGGLVSDDIIIDLIRERIAQPDCARGFLFDGFPRTIPQAEALRDAGVSIDHVLEIAVDDEEIVSRMAGRRVHAASGRVYHDLHNPPKVAGKDDETGEDLIQREDDKEETVRHRLALYHSQTKPLVDFYQRLAATTGTPRYTRVEGIGSVSEITARVQAALA</sequence>